<keyword id="KW-0066">ATP synthesis</keyword>
<keyword id="KW-1003">Cell membrane</keyword>
<keyword id="KW-0138">CF(0)</keyword>
<keyword id="KW-0375">Hydrogen ion transport</keyword>
<keyword id="KW-0406">Ion transport</keyword>
<keyword id="KW-0446">Lipid-binding</keyword>
<keyword id="KW-0472">Membrane</keyword>
<keyword id="KW-1185">Reference proteome</keyword>
<keyword id="KW-0812">Transmembrane</keyword>
<keyword id="KW-1133">Transmembrane helix</keyword>
<keyword id="KW-0813">Transport</keyword>
<organism>
    <name type="scientific">Bifidobacterium animalis subsp. lactis (strain AD011)</name>
    <dbReference type="NCBI Taxonomy" id="442563"/>
    <lineage>
        <taxon>Bacteria</taxon>
        <taxon>Bacillati</taxon>
        <taxon>Actinomycetota</taxon>
        <taxon>Actinomycetes</taxon>
        <taxon>Bifidobacteriales</taxon>
        <taxon>Bifidobacteriaceae</taxon>
        <taxon>Bifidobacterium</taxon>
    </lineage>
</organism>
<protein>
    <recommendedName>
        <fullName evidence="1">ATP synthase subunit c</fullName>
    </recommendedName>
    <alternativeName>
        <fullName evidence="1">ATP synthase F(0) sector subunit c</fullName>
    </alternativeName>
    <alternativeName>
        <fullName evidence="1">F-type ATPase subunit c</fullName>
        <shortName evidence="1">F-ATPase subunit c</shortName>
    </alternativeName>
    <alternativeName>
        <fullName evidence="1">Lipid-binding protein</fullName>
    </alternativeName>
</protein>
<dbReference type="EMBL" id="CP001213">
    <property type="protein sequence ID" value="ACL28928.1"/>
    <property type="molecule type" value="Genomic_DNA"/>
</dbReference>
<dbReference type="RefSeq" id="WP_004219171.1">
    <property type="nucleotide sequence ID" value="NC_011835.1"/>
</dbReference>
<dbReference type="SMR" id="B8DWS7"/>
<dbReference type="STRING" id="442563.BLA_0635"/>
<dbReference type="GeneID" id="89492831"/>
<dbReference type="KEGG" id="bla:BLA_0635"/>
<dbReference type="HOGENOM" id="CLU_148047_5_2_11"/>
<dbReference type="Proteomes" id="UP000002456">
    <property type="component" value="Chromosome"/>
</dbReference>
<dbReference type="GO" id="GO:0005886">
    <property type="term" value="C:plasma membrane"/>
    <property type="evidence" value="ECO:0007669"/>
    <property type="project" value="UniProtKB-SubCell"/>
</dbReference>
<dbReference type="GO" id="GO:0045259">
    <property type="term" value="C:proton-transporting ATP synthase complex"/>
    <property type="evidence" value="ECO:0007669"/>
    <property type="project" value="UniProtKB-KW"/>
</dbReference>
<dbReference type="GO" id="GO:0033177">
    <property type="term" value="C:proton-transporting two-sector ATPase complex, proton-transporting domain"/>
    <property type="evidence" value="ECO:0007669"/>
    <property type="project" value="InterPro"/>
</dbReference>
<dbReference type="GO" id="GO:0008289">
    <property type="term" value="F:lipid binding"/>
    <property type="evidence" value="ECO:0007669"/>
    <property type="project" value="UniProtKB-KW"/>
</dbReference>
<dbReference type="GO" id="GO:0046933">
    <property type="term" value="F:proton-transporting ATP synthase activity, rotational mechanism"/>
    <property type="evidence" value="ECO:0007669"/>
    <property type="project" value="UniProtKB-UniRule"/>
</dbReference>
<dbReference type="CDD" id="cd18121">
    <property type="entry name" value="ATP-synt_Fo_c"/>
    <property type="match status" value="1"/>
</dbReference>
<dbReference type="FunFam" id="1.20.20.10:FF:000002">
    <property type="entry name" value="ATP synthase subunit c"/>
    <property type="match status" value="1"/>
</dbReference>
<dbReference type="Gene3D" id="1.20.20.10">
    <property type="entry name" value="F1F0 ATP synthase subunit C"/>
    <property type="match status" value="1"/>
</dbReference>
<dbReference type="HAMAP" id="MF_01396">
    <property type="entry name" value="ATP_synth_c_bact"/>
    <property type="match status" value="1"/>
</dbReference>
<dbReference type="InterPro" id="IPR005953">
    <property type="entry name" value="ATP_synth_csu_bac/chlpt"/>
</dbReference>
<dbReference type="InterPro" id="IPR000454">
    <property type="entry name" value="ATP_synth_F0_csu"/>
</dbReference>
<dbReference type="InterPro" id="IPR020537">
    <property type="entry name" value="ATP_synth_F0_csu_DDCD_BS"/>
</dbReference>
<dbReference type="InterPro" id="IPR038662">
    <property type="entry name" value="ATP_synth_F0_csu_sf"/>
</dbReference>
<dbReference type="InterPro" id="IPR002379">
    <property type="entry name" value="ATPase_proteolipid_c-like_dom"/>
</dbReference>
<dbReference type="InterPro" id="IPR035921">
    <property type="entry name" value="F/V-ATP_Csub_sf"/>
</dbReference>
<dbReference type="NCBIfam" id="TIGR01260">
    <property type="entry name" value="ATP_synt_c"/>
    <property type="match status" value="1"/>
</dbReference>
<dbReference type="PANTHER" id="PTHR10031">
    <property type="entry name" value="ATP SYNTHASE LIPID-BINDING PROTEIN, MITOCHONDRIAL"/>
    <property type="match status" value="1"/>
</dbReference>
<dbReference type="PANTHER" id="PTHR10031:SF0">
    <property type="entry name" value="ATPASE PROTEIN 9"/>
    <property type="match status" value="1"/>
</dbReference>
<dbReference type="Pfam" id="PF00137">
    <property type="entry name" value="ATP-synt_C"/>
    <property type="match status" value="1"/>
</dbReference>
<dbReference type="PRINTS" id="PR00124">
    <property type="entry name" value="ATPASEC"/>
</dbReference>
<dbReference type="SUPFAM" id="SSF81333">
    <property type="entry name" value="F1F0 ATP synthase subunit C"/>
    <property type="match status" value="1"/>
</dbReference>
<dbReference type="PROSITE" id="PS00605">
    <property type="entry name" value="ATPASE_C"/>
    <property type="match status" value="1"/>
</dbReference>
<accession>B8DWS7</accession>
<comment type="function">
    <text evidence="1">F(1)F(0) ATP synthase produces ATP from ADP in the presence of a proton or sodium gradient. F-type ATPases consist of two structural domains, F(1) containing the extramembraneous catalytic core and F(0) containing the membrane proton channel, linked together by a central stalk and a peripheral stalk. During catalysis, ATP synthesis in the catalytic domain of F(1) is coupled via a rotary mechanism of the central stalk subunits to proton translocation.</text>
</comment>
<comment type="function">
    <text evidence="1">Key component of the F(0) channel; it plays a direct role in translocation across the membrane. A homomeric c-ring of between 10-14 subunits forms the central stalk rotor element with the F(1) delta and epsilon subunits.</text>
</comment>
<comment type="subunit">
    <text evidence="1">F-type ATPases have 2 components, F(1) - the catalytic core - and F(0) - the membrane proton channel. F(1) has five subunits: alpha(3), beta(3), gamma(1), delta(1), epsilon(1). F(0) has three main subunits: a(1), b(2) and c(10-14). The alpha and beta chains form an alternating ring which encloses part of the gamma chain. F(1) is attached to F(0) by a central stalk formed by the gamma and epsilon chains, while a peripheral stalk is formed by the delta and b chains.</text>
</comment>
<comment type="subcellular location">
    <subcellularLocation>
        <location evidence="1">Cell membrane</location>
        <topology evidence="1">Multi-pass membrane protein</topology>
    </subcellularLocation>
</comment>
<comment type="similarity">
    <text evidence="1">Belongs to the ATPase C chain family.</text>
</comment>
<gene>
    <name evidence="1" type="primary">atpE</name>
    <name type="ordered locus">BLA_0635</name>
</gene>
<reference key="1">
    <citation type="journal article" date="2009" name="J. Bacteriol.">
        <title>Genome sequence of the probiotic bacterium Bifidobacterium animalis subsp. lactis AD011.</title>
        <authorList>
            <person name="Kim J.F."/>
            <person name="Jeong H."/>
            <person name="Yu D.S."/>
            <person name="Choi S.-H."/>
            <person name="Hur C.-G."/>
            <person name="Park M.-S."/>
            <person name="Yoon S.H."/>
            <person name="Kim D.-W."/>
            <person name="Ji G.E."/>
            <person name="Park H.-S."/>
            <person name="Oh T.K."/>
        </authorList>
    </citation>
    <scope>NUCLEOTIDE SEQUENCE [LARGE SCALE GENOMIC DNA]</scope>
    <source>
        <strain>AD011</strain>
    </source>
</reference>
<proteinExistence type="inferred from homology"/>
<name>ATPL_BIFA0</name>
<sequence>MDIVTLAEVAGNLNVVGYGLAAIGPGIGLGILIGKTIESTARQPELGGRLQTLMFLGLAFVEVLALLGFVAAFIFQ</sequence>
<evidence type="ECO:0000255" key="1">
    <source>
        <dbReference type="HAMAP-Rule" id="MF_01396"/>
    </source>
</evidence>
<feature type="chain" id="PRO_1000184336" description="ATP synthase subunit c">
    <location>
        <begin position="1"/>
        <end position="76"/>
    </location>
</feature>
<feature type="transmembrane region" description="Helical" evidence="1">
    <location>
        <begin position="13"/>
        <end position="33"/>
    </location>
</feature>
<feature type="transmembrane region" description="Helical" evidence="1">
    <location>
        <begin position="55"/>
        <end position="75"/>
    </location>
</feature>
<feature type="site" description="Reversibly protonated during proton transport" evidence="1">
    <location>
        <position position="62"/>
    </location>
</feature>